<organism>
    <name type="scientific">Fervidobacterium nodosum (strain ATCC 35602 / DSM 5306 / Rt17-B1)</name>
    <dbReference type="NCBI Taxonomy" id="381764"/>
    <lineage>
        <taxon>Bacteria</taxon>
        <taxon>Thermotogati</taxon>
        <taxon>Thermotogota</taxon>
        <taxon>Thermotogae</taxon>
        <taxon>Thermotogales</taxon>
        <taxon>Fervidobacteriaceae</taxon>
        <taxon>Fervidobacterium</taxon>
    </lineage>
</organism>
<comment type="function">
    <text evidence="1">Assembles around the rod to form the L-ring and probably protects the motor/basal body from shearing forces during rotation.</text>
</comment>
<comment type="subunit">
    <text evidence="1">The basal body constitutes a major portion of the flagellar organelle and consists of four rings (L,P,S, and M) mounted on a central rod.</text>
</comment>
<comment type="subcellular location">
    <subcellularLocation>
        <location evidence="1">Periplasm</location>
    </subcellularLocation>
    <subcellularLocation>
        <location evidence="1">Bacterial flagellum basal body</location>
    </subcellularLocation>
</comment>
<comment type="similarity">
    <text evidence="1">Belongs to the FlgI family.</text>
</comment>
<proteinExistence type="inferred from homology"/>
<name>FLGI_FERNB</name>
<protein>
    <recommendedName>
        <fullName evidence="1">Flagellar P-ring protein</fullName>
    </recommendedName>
    <alternativeName>
        <fullName evidence="1">Basal body P-ring protein</fullName>
    </alternativeName>
</protein>
<dbReference type="EMBL" id="CP000771">
    <property type="protein sequence ID" value="ABS60696.1"/>
    <property type="molecule type" value="Genomic_DNA"/>
</dbReference>
<dbReference type="RefSeq" id="WP_011994012.1">
    <property type="nucleotide sequence ID" value="NC_009718.1"/>
</dbReference>
<dbReference type="SMR" id="A7HLB3"/>
<dbReference type="STRING" id="381764.Fnod_0843"/>
<dbReference type="KEGG" id="fno:Fnod_0843"/>
<dbReference type="eggNOG" id="COG1706">
    <property type="taxonomic scope" value="Bacteria"/>
</dbReference>
<dbReference type="HOGENOM" id="CLU_045235_1_0_0"/>
<dbReference type="OrthoDB" id="9786431at2"/>
<dbReference type="Proteomes" id="UP000002415">
    <property type="component" value="Chromosome"/>
</dbReference>
<dbReference type="GO" id="GO:0009428">
    <property type="term" value="C:bacterial-type flagellum basal body, distal rod, P ring"/>
    <property type="evidence" value="ECO:0007669"/>
    <property type="project" value="InterPro"/>
</dbReference>
<dbReference type="GO" id="GO:0030288">
    <property type="term" value="C:outer membrane-bounded periplasmic space"/>
    <property type="evidence" value="ECO:0007669"/>
    <property type="project" value="InterPro"/>
</dbReference>
<dbReference type="GO" id="GO:0005198">
    <property type="term" value="F:structural molecule activity"/>
    <property type="evidence" value="ECO:0007669"/>
    <property type="project" value="InterPro"/>
</dbReference>
<dbReference type="GO" id="GO:0071973">
    <property type="term" value="P:bacterial-type flagellum-dependent cell motility"/>
    <property type="evidence" value="ECO:0007669"/>
    <property type="project" value="InterPro"/>
</dbReference>
<dbReference type="HAMAP" id="MF_00416">
    <property type="entry name" value="FlgI"/>
    <property type="match status" value="1"/>
</dbReference>
<dbReference type="InterPro" id="IPR001782">
    <property type="entry name" value="Flag_FlgI"/>
</dbReference>
<dbReference type="NCBIfam" id="NF003676">
    <property type="entry name" value="PRK05303.1"/>
    <property type="match status" value="1"/>
</dbReference>
<dbReference type="PANTHER" id="PTHR30381">
    <property type="entry name" value="FLAGELLAR P-RING PERIPLASMIC PROTEIN FLGI"/>
    <property type="match status" value="1"/>
</dbReference>
<dbReference type="PANTHER" id="PTHR30381:SF0">
    <property type="entry name" value="FLAGELLAR P-RING PROTEIN"/>
    <property type="match status" value="1"/>
</dbReference>
<dbReference type="Pfam" id="PF02119">
    <property type="entry name" value="FlgI"/>
    <property type="match status" value="2"/>
</dbReference>
<dbReference type="PRINTS" id="PR01010">
    <property type="entry name" value="FLGPRINGFLGI"/>
</dbReference>
<accession>A7HLB3</accession>
<evidence type="ECO:0000255" key="1">
    <source>
        <dbReference type="HAMAP-Rule" id="MF_00416"/>
    </source>
</evidence>
<keyword id="KW-0975">Bacterial flagellum</keyword>
<keyword id="KW-0574">Periplasm</keyword>
<keyword id="KW-1185">Reference proteome</keyword>
<keyword id="KW-0732">Signal</keyword>
<reference key="1">
    <citation type="submission" date="2007-07" db="EMBL/GenBank/DDBJ databases">
        <title>Complete sequence of Fervidobacterium nodosum Rt17-B1.</title>
        <authorList>
            <consortium name="US DOE Joint Genome Institute"/>
            <person name="Copeland A."/>
            <person name="Lucas S."/>
            <person name="Lapidus A."/>
            <person name="Barry K."/>
            <person name="Glavina del Rio T."/>
            <person name="Dalin E."/>
            <person name="Tice H."/>
            <person name="Pitluck S."/>
            <person name="Saunders E."/>
            <person name="Brettin T."/>
            <person name="Bruce D."/>
            <person name="Detter J.C."/>
            <person name="Han C."/>
            <person name="Schmutz J."/>
            <person name="Larimer F."/>
            <person name="Land M."/>
            <person name="Hauser L."/>
            <person name="Kyrpides N."/>
            <person name="Mikhailova N."/>
            <person name="Nelson K."/>
            <person name="Gogarten J.P."/>
            <person name="Noll K."/>
            <person name="Richardson P."/>
        </authorList>
    </citation>
    <scope>NUCLEOTIDE SEQUENCE [LARGE SCALE GENOMIC DNA]</scope>
    <source>
        <strain>ATCC 35602 / DSM 5306 / Rt17-B1</strain>
    </source>
</reference>
<feature type="signal peptide" evidence="1">
    <location>
        <begin position="1"/>
        <end position="22"/>
    </location>
</feature>
<feature type="chain" id="PRO_1000072287" description="Flagellar P-ring protein">
    <location>
        <begin position="23"/>
        <end position="333"/>
    </location>
</feature>
<sequence length="333" mass="35452">MRRNILSMFLFITLIIYSSIFAVNVRIKDFAKFRGARDNQLFGVGIVVGLNGTGDSGTLNSTLLSNMLKNFGVAVNPNDLKTKNAALVMVVADIPPFYKPGMRLDVEVASINDAKSLRNGILLQTPLYGADGNVYAVAQGPVSVGGEDVKGSVNLQKRFPVVGYIPEGALVEREIPFSIVDGNSVTILLNKPDFTTAARTALAINTKFGTNIAKALDGASVKVNIPNVFSDDVISFLALLEEIEVPVDVVAQVVINERTGTVVFGGDIGIADFVLSYGNFVITISNGQIGDKKATIGNLITALKSLGATPQDIIAVVQELYKAGVIFAQLKIM</sequence>
<gene>
    <name evidence="1" type="primary">flgI</name>
    <name type="ordered locus">Fnod_0843</name>
</gene>